<sequence length="213" mass="24118">MYPGRNFPPRRQNRRENVNESIRVREVRAVFPDGTTEVMPTAAALRKAQELGLDLVLIAPTAVPPVAKAVDFGHYQYDLKKKQHDARKKQHVVQVKELKFRPNTDDHDYDFKKKHAIRFLQEGNRVKAVVQFRGREIAHADLGKKLLMRFAADLTAYGTVEGMPRLEGRNAHVLISPVKTLIKSEKPEKPEKPEKSEKTEKQGPSTPPAPSAS</sequence>
<name>IF3_SOLUE</name>
<evidence type="ECO:0000255" key="1">
    <source>
        <dbReference type="HAMAP-Rule" id="MF_00080"/>
    </source>
</evidence>
<evidence type="ECO:0000256" key="2">
    <source>
        <dbReference type="SAM" id="MobiDB-lite"/>
    </source>
</evidence>
<organism>
    <name type="scientific">Solibacter usitatus (strain Ellin6076)</name>
    <dbReference type="NCBI Taxonomy" id="234267"/>
    <lineage>
        <taxon>Bacteria</taxon>
        <taxon>Pseudomonadati</taxon>
        <taxon>Acidobacteriota</taxon>
        <taxon>Terriglobia</taxon>
        <taxon>Bryobacterales</taxon>
        <taxon>Solibacteraceae</taxon>
        <taxon>Candidatus Solibacter</taxon>
    </lineage>
</organism>
<keyword id="KW-0963">Cytoplasm</keyword>
<keyword id="KW-0396">Initiation factor</keyword>
<keyword id="KW-0648">Protein biosynthesis</keyword>
<protein>
    <recommendedName>
        <fullName evidence="1">Translation initiation factor IF-3</fullName>
    </recommendedName>
</protein>
<comment type="function">
    <text evidence="1">IF-3 binds to the 30S ribosomal subunit and shifts the equilibrium between 70S ribosomes and their 50S and 30S subunits in favor of the free subunits, thus enhancing the availability of 30S subunits on which protein synthesis initiation begins.</text>
</comment>
<comment type="subunit">
    <text evidence="1">Monomer.</text>
</comment>
<comment type="subcellular location">
    <subcellularLocation>
        <location evidence="1">Cytoplasm</location>
    </subcellularLocation>
</comment>
<comment type="similarity">
    <text evidence="1">Belongs to the IF-3 family.</text>
</comment>
<proteinExistence type="inferred from homology"/>
<gene>
    <name evidence="1" type="primary">infC</name>
    <name type="ordered locus">Acid_1422</name>
</gene>
<dbReference type="EMBL" id="CP000473">
    <property type="protein sequence ID" value="ABJ82415.1"/>
    <property type="molecule type" value="Genomic_DNA"/>
</dbReference>
<dbReference type="SMR" id="Q02D92"/>
<dbReference type="FunCoup" id="Q02D92">
    <property type="interactions" value="591"/>
</dbReference>
<dbReference type="STRING" id="234267.Acid_1422"/>
<dbReference type="KEGG" id="sus:Acid_1422"/>
<dbReference type="eggNOG" id="COG0290">
    <property type="taxonomic scope" value="Bacteria"/>
</dbReference>
<dbReference type="HOGENOM" id="CLU_054919_3_0_0"/>
<dbReference type="InParanoid" id="Q02D92"/>
<dbReference type="OrthoDB" id="9806014at2"/>
<dbReference type="GO" id="GO:0005829">
    <property type="term" value="C:cytosol"/>
    <property type="evidence" value="ECO:0007669"/>
    <property type="project" value="TreeGrafter"/>
</dbReference>
<dbReference type="GO" id="GO:0016020">
    <property type="term" value="C:membrane"/>
    <property type="evidence" value="ECO:0007669"/>
    <property type="project" value="TreeGrafter"/>
</dbReference>
<dbReference type="GO" id="GO:0043022">
    <property type="term" value="F:ribosome binding"/>
    <property type="evidence" value="ECO:0007669"/>
    <property type="project" value="TreeGrafter"/>
</dbReference>
<dbReference type="GO" id="GO:0003743">
    <property type="term" value="F:translation initiation factor activity"/>
    <property type="evidence" value="ECO:0007669"/>
    <property type="project" value="UniProtKB-UniRule"/>
</dbReference>
<dbReference type="GO" id="GO:0032790">
    <property type="term" value="P:ribosome disassembly"/>
    <property type="evidence" value="ECO:0007669"/>
    <property type="project" value="TreeGrafter"/>
</dbReference>
<dbReference type="FunFam" id="3.30.110.10:FF:000001">
    <property type="entry name" value="Translation initiation factor IF-3"/>
    <property type="match status" value="1"/>
</dbReference>
<dbReference type="Gene3D" id="3.30.110.10">
    <property type="entry name" value="Translation initiation factor 3 (IF-3), C-terminal domain"/>
    <property type="match status" value="1"/>
</dbReference>
<dbReference type="Gene3D" id="3.10.20.80">
    <property type="entry name" value="Translation initiation factor 3 (IF-3), N-terminal domain"/>
    <property type="match status" value="1"/>
</dbReference>
<dbReference type="HAMAP" id="MF_00080">
    <property type="entry name" value="IF_3"/>
    <property type="match status" value="1"/>
</dbReference>
<dbReference type="InterPro" id="IPR036788">
    <property type="entry name" value="T_IF-3_C_sf"/>
</dbReference>
<dbReference type="InterPro" id="IPR036787">
    <property type="entry name" value="T_IF-3_N_sf"/>
</dbReference>
<dbReference type="InterPro" id="IPR001288">
    <property type="entry name" value="Translation_initiation_fac_3"/>
</dbReference>
<dbReference type="InterPro" id="IPR019815">
    <property type="entry name" value="Translation_initiation_fac_3_C"/>
</dbReference>
<dbReference type="InterPro" id="IPR019814">
    <property type="entry name" value="Translation_initiation_fac_3_N"/>
</dbReference>
<dbReference type="NCBIfam" id="TIGR00168">
    <property type="entry name" value="infC"/>
    <property type="match status" value="1"/>
</dbReference>
<dbReference type="PANTHER" id="PTHR10938">
    <property type="entry name" value="TRANSLATION INITIATION FACTOR IF-3"/>
    <property type="match status" value="1"/>
</dbReference>
<dbReference type="PANTHER" id="PTHR10938:SF0">
    <property type="entry name" value="TRANSLATION INITIATION FACTOR IF-3, MITOCHONDRIAL"/>
    <property type="match status" value="1"/>
</dbReference>
<dbReference type="Pfam" id="PF00707">
    <property type="entry name" value="IF3_C"/>
    <property type="match status" value="1"/>
</dbReference>
<dbReference type="Pfam" id="PF05198">
    <property type="entry name" value="IF3_N"/>
    <property type="match status" value="1"/>
</dbReference>
<dbReference type="SUPFAM" id="SSF55200">
    <property type="entry name" value="Translation initiation factor IF3, C-terminal domain"/>
    <property type="match status" value="1"/>
</dbReference>
<dbReference type="SUPFAM" id="SSF54364">
    <property type="entry name" value="Translation initiation factor IF3, N-terminal domain"/>
    <property type="match status" value="1"/>
</dbReference>
<feature type="chain" id="PRO_1000004565" description="Translation initiation factor IF-3">
    <location>
        <begin position="1"/>
        <end position="213"/>
    </location>
</feature>
<feature type="region of interest" description="Disordered" evidence="2">
    <location>
        <begin position="178"/>
        <end position="213"/>
    </location>
</feature>
<feature type="compositionally biased region" description="Basic and acidic residues" evidence="2">
    <location>
        <begin position="182"/>
        <end position="201"/>
    </location>
</feature>
<reference key="1">
    <citation type="journal article" date="2009" name="Appl. Environ. Microbiol.">
        <title>Three genomes from the phylum Acidobacteria provide insight into the lifestyles of these microorganisms in soils.</title>
        <authorList>
            <person name="Ward N.L."/>
            <person name="Challacombe J.F."/>
            <person name="Janssen P.H."/>
            <person name="Henrissat B."/>
            <person name="Coutinho P.M."/>
            <person name="Wu M."/>
            <person name="Xie G."/>
            <person name="Haft D.H."/>
            <person name="Sait M."/>
            <person name="Badger J."/>
            <person name="Barabote R.D."/>
            <person name="Bradley B."/>
            <person name="Brettin T.S."/>
            <person name="Brinkac L.M."/>
            <person name="Bruce D."/>
            <person name="Creasy T."/>
            <person name="Daugherty S.C."/>
            <person name="Davidsen T.M."/>
            <person name="DeBoy R.T."/>
            <person name="Detter J.C."/>
            <person name="Dodson R.J."/>
            <person name="Durkin A.S."/>
            <person name="Ganapathy A."/>
            <person name="Gwinn-Giglio M."/>
            <person name="Han C.S."/>
            <person name="Khouri H."/>
            <person name="Kiss H."/>
            <person name="Kothari S.P."/>
            <person name="Madupu R."/>
            <person name="Nelson K.E."/>
            <person name="Nelson W.C."/>
            <person name="Paulsen I."/>
            <person name="Penn K."/>
            <person name="Ren Q."/>
            <person name="Rosovitz M.J."/>
            <person name="Selengut J.D."/>
            <person name="Shrivastava S."/>
            <person name="Sullivan S.A."/>
            <person name="Tapia R."/>
            <person name="Thompson L.S."/>
            <person name="Watkins K.L."/>
            <person name="Yang Q."/>
            <person name="Yu C."/>
            <person name="Zafar N."/>
            <person name="Zhou L."/>
            <person name="Kuske C.R."/>
        </authorList>
    </citation>
    <scope>NUCLEOTIDE SEQUENCE [LARGE SCALE GENOMIC DNA]</scope>
    <source>
        <strain>Ellin6076</strain>
    </source>
</reference>
<accession>Q02D92</accession>